<feature type="chain" id="PRO_0000351000" description="Putative ATP-dependent DNA helicase fml2">
    <location>
        <begin position="1"/>
        <end position="783"/>
    </location>
</feature>
<feature type="domain" description="Helicase ATP-binding" evidence="1">
    <location>
        <begin position="118"/>
        <end position="286"/>
    </location>
</feature>
<feature type="domain" description="Helicase C-terminal" evidence="2">
    <location>
        <begin position="450"/>
        <end position="619"/>
    </location>
</feature>
<feature type="short sequence motif" description="DEAH box" evidence="1">
    <location>
        <begin position="234"/>
        <end position="237"/>
    </location>
</feature>
<feature type="binding site" evidence="1">
    <location>
        <begin position="131"/>
        <end position="138"/>
    </location>
    <ligand>
        <name>ATP</name>
        <dbReference type="ChEBI" id="CHEBI:30616"/>
    </ligand>
</feature>
<protein>
    <recommendedName>
        <fullName>Putative ATP-dependent DNA helicase fml2</fullName>
        <ecNumber>3.6.4.12</ecNumber>
    </recommendedName>
    <alternativeName>
        <fullName>FANCM-like protein 2</fullName>
    </alternativeName>
</protein>
<proteinExistence type="inferred from homology"/>
<organism>
    <name type="scientific">Schizosaccharomyces pombe (strain 972 / ATCC 24843)</name>
    <name type="common">Fission yeast</name>
    <dbReference type="NCBI Taxonomy" id="284812"/>
    <lineage>
        <taxon>Eukaryota</taxon>
        <taxon>Fungi</taxon>
        <taxon>Dikarya</taxon>
        <taxon>Ascomycota</taxon>
        <taxon>Taphrinomycotina</taxon>
        <taxon>Schizosaccharomycetes</taxon>
        <taxon>Schizosaccharomycetales</taxon>
        <taxon>Schizosaccharomycetaceae</taxon>
        <taxon>Schizosaccharomyces</taxon>
    </lineage>
</organism>
<sequence length="783" mass="89463">MIVLRDSSDYSDSEVDLPSIEVNGERGNVPTSVLCNVEGSLLNSNPALRQPNLKCIKHNQDVENTTFQLDLRGCRVPSSQPQVITELENNIDIPKNIDAMQNWIFPQTQQYRNYQKEFCEQALFHNLLLALPTGLGKTFIAAVVMLNYFRWFPESKIIFLAPTKPLLLQQRVACSNVAGMSPGATAELNGEVSPDRRLFEYNTKRVFFMTPQTLQNDLKEHLLDAKSIICLIFDEAHRATGNHSYAQVMRAVLRSNSHFRVLGLTATPGSSTASVQKVVDCLHISKLIVRNEESIDIRSYVFHKKIQLIKVTISSEMNILKSDFANLYRPYFNFLRQKKLIPINCECLNIKAYTLFVSLRKYSFSSKNVQSKEKSKIMSCFTLLISCAHITYLLDCHGIIQFYQKLVETKNKAEGKGSGQSFWLFTSKPFAFYLEHLHNKIQGLSLNHPKMNHLLELLKEHFKDTSEGYQNQRVMIFTEFRNTAEYITTTLLAIRPMVRASLFIGQANSAYSTGMNQMQQKETIDQFRAGVINTLVATSIGEEGLDIGDTDMIICYDASSSPIRTIQRMGRTGRKKSGKVFVLLTEDCEDSKWERSQVSYRRVQKVIESGKKIALKKDVPRLIPSNIQPIFKFQALQNNADATLILNSYNNNSSSLSPVNTLANQAHSRSKRYLPFIVDDVFEDMESNLRVPTEDAKIKRFKSDYRSCIYNARRNVFSKPTYMGDKLTKFAKVPHSLLTLSIYRRGRLLQQCSPSSVTKYLKYEEKFKRKRMKKTSNALFQST</sequence>
<keyword id="KW-0067">ATP-binding</keyword>
<keyword id="KW-0347">Helicase</keyword>
<keyword id="KW-0378">Hydrolase</keyword>
<keyword id="KW-0547">Nucleotide-binding</keyword>
<keyword id="KW-0539">Nucleus</keyword>
<keyword id="KW-1185">Reference proteome</keyword>
<accession>Q9HE09</accession>
<dbReference type="EC" id="3.6.4.12"/>
<dbReference type="EMBL" id="CU329670">
    <property type="protein sequence ID" value="CAC19734.1"/>
    <property type="molecule type" value="Genomic_DNA"/>
</dbReference>
<dbReference type="RefSeq" id="NP_593624.1">
    <property type="nucleotide sequence ID" value="NM_001019055.2"/>
</dbReference>
<dbReference type="SMR" id="Q9HE09"/>
<dbReference type="BioGRID" id="278497">
    <property type="interactions" value="55"/>
</dbReference>
<dbReference type="FunCoup" id="Q9HE09">
    <property type="interactions" value="83"/>
</dbReference>
<dbReference type="STRING" id="284812.Q9HE09"/>
<dbReference type="iPTMnet" id="Q9HE09"/>
<dbReference type="PaxDb" id="4896-SPAC20H4.04.1"/>
<dbReference type="EnsemblFungi" id="SPAC20H4.04.1">
    <property type="protein sequence ID" value="SPAC20H4.04.1:pep"/>
    <property type="gene ID" value="SPAC20H4.04"/>
</dbReference>
<dbReference type="PomBase" id="SPAC20H4.04">
    <property type="gene designation" value="fml2"/>
</dbReference>
<dbReference type="VEuPathDB" id="FungiDB:SPAC20H4.04"/>
<dbReference type="eggNOG" id="KOG0354">
    <property type="taxonomic scope" value="Eukaryota"/>
</dbReference>
<dbReference type="HOGENOM" id="CLU_002513_3_2_1"/>
<dbReference type="InParanoid" id="Q9HE09"/>
<dbReference type="OMA" id="YQFTIVQ"/>
<dbReference type="PhylomeDB" id="Q9HE09"/>
<dbReference type="PRO" id="PR:Q9HE09"/>
<dbReference type="Proteomes" id="UP000002485">
    <property type="component" value="Chromosome I"/>
</dbReference>
<dbReference type="GO" id="GO:0005730">
    <property type="term" value="C:nucleolus"/>
    <property type="evidence" value="ECO:0007005"/>
    <property type="project" value="PomBase"/>
</dbReference>
<dbReference type="GO" id="GO:0005634">
    <property type="term" value="C:nucleus"/>
    <property type="evidence" value="ECO:0007005"/>
    <property type="project" value="PomBase"/>
</dbReference>
<dbReference type="GO" id="GO:0043138">
    <property type="term" value="F:3'-5' DNA helicase activity"/>
    <property type="evidence" value="ECO:0000318"/>
    <property type="project" value="GO_Central"/>
</dbReference>
<dbReference type="GO" id="GO:0005524">
    <property type="term" value="F:ATP binding"/>
    <property type="evidence" value="ECO:0007669"/>
    <property type="project" value="UniProtKB-KW"/>
</dbReference>
<dbReference type="GO" id="GO:0016887">
    <property type="term" value="F:ATP hydrolysis activity"/>
    <property type="evidence" value="ECO:0007669"/>
    <property type="project" value="RHEA"/>
</dbReference>
<dbReference type="GO" id="GO:0000400">
    <property type="term" value="F:four-way junction DNA binding"/>
    <property type="evidence" value="ECO:0000318"/>
    <property type="project" value="GO_Central"/>
</dbReference>
<dbReference type="GO" id="GO:0009378">
    <property type="term" value="F:four-way junction helicase activity"/>
    <property type="evidence" value="ECO:0000318"/>
    <property type="project" value="GO_Central"/>
</dbReference>
<dbReference type="GO" id="GO:0045003">
    <property type="term" value="P:double-strand break repair via synthesis-dependent strand annealing"/>
    <property type="evidence" value="ECO:0000318"/>
    <property type="project" value="GO_Central"/>
</dbReference>
<dbReference type="GO" id="GO:0036297">
    <property type="term" value="P:interstrand cross-link repair"/>
    <property type="evidence" value="ECO:0000318"/>
    <property type="project" value="GO_Central"/>
</dbReference>
<dbReference type="GO" id="GO:1903461">
    <property type="term" value="P:Okazaki fragment processing involved in mitotic DNA replication"/>
    <property type="evidence" value="ECO:0000266"/>
    <property type="project" value="PomBase"/>
</dbReference>
<dbReference type="CDD" id="cd18033">
    <property type="entry name" value="DEXDc_FANCM"/>
    <property type="match status" value="1"/>
</dbReference>
<dbReference type="CDD" id="cd12091">
    <property type="entry name" value="FANCM_ID"/>
    <property type="match status" value="1"/>
</dbReference>
<dbReference type="CDD" id="cd18801">
    <property type="entry name" value="SF2_C_FANCM_Hef"/>
    <property type="match status" value="1"/>
</dbReference>
<dbReference type="FunFam" id="3.40.50.300:FF:000861">
    <property type="entry name" value="Fanconi anemia, complementation group M"/>
    <property type="match status" value="1"/>
</dbReference>
<dbReference type="Gene3D" id="3.40.50.300">
    <property type="entry name" value="P-loop containing nucleotide triphosphate hydrolases"/>
    <property type="match status" value="2"/>
</dbReference>
<dbReference type="InterPro" id="IPR039686">
    <property type="entry name" value="FANCM/Mph1-like_ID"/>
</dbReference>
<dbReference type="InterPro" id="IPR044749">
    <property type="entry name" value="FANCM_DEXDc"/>
</dbReference>
<dbReference type="InterPro" id="IPR006935">
    <property type="entry name" value="Helicase/UvrB_N"/>
</dbReference>
<dbReference type="InterPro" id="IPR014001">
    <property type="entry name" value="Helicase_ATP-bd"/>
</dbReference>
<dbReference type="InterPro" id="IPR001650">
    <property type="entry name" value="Helicase_C-like"/>
</dbReference>
<dbReference type="InterPro" id="IPR027417">
    <property type="entry name" value="P-loop_NTPase"/>
</dbReference>
<dbReference type="PANTHER" id="PTHR14025">
    <property type="entry name" value="FANCONI ANEMIA GROUP M FANCM FAMILY MEMBER"/>
    <property type="match status" value="1"/>
</dbReference>
<dbReference type="PANTHER" id="PTHR14025:SF20">
    <property type="entry name" value="FANCONI ANEMIA GROUP M PROTEIN"/>
    <property type="match status" value="1"/>
</dbReference>
<dbReference type="Pfam" id="PF00271">
    <property type="entry name" value="Helicase_C"/>
    <property type="match status" value="1"/>
</dbReference>
<dbReference type="Pfam" id="PF04851">
    <property type="entry name" value="ResIII"/>
    <property type="match status" value="1"/>
</dbReference>
<dbReference type="SMART" id="SM00487">
    <property type="entry name" value="DEXDc"/>
    <property type="match status" value="1"/>
</dbReference>
<dbReference type="SMART" id="SM00490">
    <property type="entry name" value="HELICc"/>
    <property type="match status" value="1"/>
</dbReference>
<dbReference type="SUPFAM" id="SSF52540">
    <property type="entry name" value="P-loop containing nucleoside triphosphate hydrolases"/>
    <property type="match status" value="1"/>
</dbReference>
<dbReference type="PROSITE" id="PS51192">
    <property type="entry name" value="HELICASE_ATP_BIND_1"/>
    <property type="match status" value="1"/>
</dbReference>
<dbReference type="PROSITE" id="PS51194">
    <property type="entry name" value="HELICASE_CTER"/>
    <property type="match status" value="1"/>
</dbReference>
<evidence type="ECO:0000255" key="1">
    <source>
        <dbReference type="PROSITE-ProRule" id="PRU00541"/>
    </source>
</evidence>
<evidence type="ECO:0000255" key="2">
    <source>
        <dbReference type="PROSITE-ProRule" id="PRU00542"/>
    </source>
</evidence>
<evidence type="ECO:0000269" key="3">
    <source>
    </source>
</evidence>
<evidence type="ECO:0000303" key="4">
    <source>
    </source>
</evidence>
<evidence type="ECO:0000305" key="5"/>
<evidence type="ECO:0000312" key="6">
    <source>
        <dbReference type="PomBase" id="SPAC20H4.04"/>
    </source>
</evidence>
<name>MFH2_SCHPO</name>
<gene>
    <name evidence="4" type="primary">fml2</name>
    <name evidence="6" type="synonym">mfh2</name>
    <name evidence="6" type="ORF">SPAC20H4.04</name>
</gene>
<reference key="1">
    <citation type="journal article" date="2002" name="Nature">
        <title>The genome sequence of Schizosaccharomyces pombe.</title>
        <authorList>
            <person name="Wood V."/>
            <person name="Gwilliam R."/>
            <person name="Rajandream M.A."/>
            <person name="Lyne M.H."/>
            <person name="Lyne R."/>
            <person name="Stewart A."/>
            <person name="Sgouros J.G."/>
            <person name="Peat N."/>
            <person name="Hayles J."/>
            <person name="Baker S.G."/>
            <person name="Basham D."/>
            <person name="Bowman S."/>
            <person name="Brooks K."/>
            <person name="Brown D."/>
            <person name="Brown S."/>
            <person name="Chillingworth T."/>
            <person name="Churcher C.M."/>
            <person name="Collins M."/>
            <person name="Connor R."/>
            <person name="Cronin A."/>
            <person name="Davis P."/>
            <person name="Feltwell T."/>
            <person name="Fraser A."/>
            <person name="Gentles S."/>
            <person name="Goble A."/>
            <person name="Hamlin N."/>
            <person name="Harris D.E."/>
            <person name="Hidalgo J."/>
            <person name="Hodgson G."/>
            <person name="Holroyd S."/>
            <person name="Hornsby T."/>
            <person name="Howarth S."/>
            <person name="Huckle E.J."/>
            <person name="Hunt S."/>
            <person name="Jagels K."/>
            <person name="James K.D."/>
            <person name="Jones L."/>
            <person name="Jones M."/>
            <person name="Leather S."/>
            <person name="McDonald S."/>
            <person name="McLean J."/>
            <person name="Mooney P."/>
            <person name="Moule S."/>
            <person name="Mungall K.L."/>
            <person name="Murphy L.D."/>
            <person name="Niblett D."/>
            <person name="Odell C."/>
            <person name="Oliver K."/>
            <person name="O'Neil S."/>
            <person name="Pearson D."/>
            <person name="Quail M.A."/>
            <person name="Rabbinowitsch E."/>
            <person name="Rutherford K.M."/>
            <person name="Rutter S."/>
            <person name="Saunders D."/>
            <person name="Seeger K."/>
            <person name="Sharp S."/>
            <person name="Skelton J."/>
            <person name="Simmonds M.N."/>
            <person name="Squares R."/>
            <person name="Squares S."/>
            <person name="Stevens K."/>
            <person name="Taylor K."/>
            <person name="Taylor R.G."/>
            <person name="Tivey A."/>
            <person name="Walsh S.V."/>
            <person name="Warren T."/>
            <person name="Whitehead S."/>
            <person name="Woodward J.R."/>
            <person name="Volckaert G."/>
            <person name="Aert R."/>
            <person name="Robben J."/>
            <person name="Grymonprez B."/>
            <person name="Weltjens I."/>
            <person name="Vanstreels E."/>
            <person name="Rieger M."/>
            <person name="Schaefer M."/>
            <person name="Mueller-Auer S."/>
            <person name="Gabel C."/>
            <person name="Fuchs M."/>
            <person name="Duesterhoeft A."/>
            <person name="Fritzc C."/>
            <person name="Holzer E."/>
            <person name="Moestl D."/>
            <person name="Hilbert H."/>
            <person name="Borzym K."/>
            <person name="Langer I."/>
            <person name="Beck A."/>
            <person name="Lehrach H."/>
            <person name="Reinhardt R."/>
            <person name="Pohl T.M."/>
            <person name="Eger P."/>
            <person name="Zimmermann W."/>
            <person name="Wedler H."/>
            <person name="Wambutt R."/>
            <person name="Purnelle B."/>
            <person name="Goffeau A."/>
            <person name="Cadieu E."/>
            <person name="Dreano S."/>
            <person name="Gloux S."/>
            <person name="Lelaure V."/>
            <person name="Mottier S."/>
            <person name="Galibert F."/>
            <person name="Aves S.J."/>
            <person name="Xiang Z."/>
            <person name="Hunt C."/>
            <person name="Moore K."/>
            <person name="Hurst S.M."/>
            <person name="Lucas M."/>
            <person name="Rochet M."/>
            <person name="Gaillardin C."/>
            <person name="Tallada V.A."/>
            <person name="Garzon A."/>
            <person name="Thode G."/>
            <person name="Daga R.R."/>
            <person name="Cruzado L."/>
            <person name="Jimenez J."/>
            <person name="Sanchez M."/>
            <person name="del Rey F."/>
            <person name="Benito J."/>
            <person name="Dominguez A."/>
            <person name="Revuelta J.L."/>
            <person name="Moreno S."/>
            <person name="Armstrong J."/>
            <person name="Forsburg S.L."/>
            <person name="Cerutti L."/>
            <person name="Lowe T."/>
            <person name="McCombie W.R."/>
            <person name="Paulsen I."/>
            <person name="Potashkin J."/>
            <person name="Shpakovski G.V."/>
            <person name="Ussery D."/>
            <person name="Barrell B.G."/>
            <person name="Nurse P."/>
        </authorList>
    </citation>
    <scope>NUCLEOTIDE SEQUENCE [LARGE SCALE GENOMIC DNA]</scope>
    <source>
        <strain>972 / ATCC 24843</strain>
    </source>
</reference>
<reference key="2">
    <citation type="journal article" date="2006" name="Nat. Biotechnol.">
        <title>ORFeome cloning and global analysis of protein localization in the fission yeast Schizosaccharomyces pombe.</title>
        <authorList>
            <person name="Matsuyama A."/>
            <person name="Arai R."/>
            <person name="Yashiroda Y."/>
            <person name="Shirai A."/>
            <person name="Kamata A."/>
            <person name="Sekido S."/>
            <person name="Kobayashi Y."/>
            <person name="Hashimoto A."/>
            <person name="Hamamoto M."/>
            <person name="Hiraoka Y."/>
            <person name="Horinouchi S."/>
            <person name="Yoshida M."/>
        </authorList>
    </citation>
    <scope>SUBCELLULAR LOCATION [LARGE SCALE ANALYSIS]</scope>
</reference>
<reference key="3">
    <citation type="journal article" date="2008" name="Mol. Cell">
        <title>The FANCM ortholog Fml1 promotes recombination at stalled replication forks and limits crossing over during DNA double-strand break repair.</title>
        <authorList>
            <person name="Sun W."/>
            <person name="Nandi S."/>
            <person name="Osman F."/>
            <person name="Ahn J.S."/>
            <person name="Jakovleska J."/>
            <person name="Lorenz A."/>
            <person name="Whitby M.C."/>
        </authorList>
    </citation>
    <scope>GENE NAME</scope>
</reference>
<comment type="catalytic activity">
    <reaction>
        <text>ATP + H2O = ADP + phosphate + H(+)</text>
        <dbReference type="Rhea" id="RHEA:13065"/>
        <dbReference type="ChEBI" id="CHEBI:15377"/>
        <dbReference type="ChEBI" id="CHEBI:15378"/>
        <dbReference type="ChEBI" id="CHEBI:30616"/>
        <dbReference type="ChEBI" id="CHEBI:43474"/>
        <dbReference type="ChEBI" id="CHEBI:456216"/>
        <dbReference type="EC" id="3.6.4.12"/>
    </reaction>
</comment>
<comment type="subcellular location">
    <subcellularLocation>
        <location evidence="3">Nucleus</location>
        <location evidence="3">Nucleolus</location>
    </subcellularLocation>
</comment>
<comment type="similarity">
    <text evidence="5">Belongs to the DEAD box helicase family. DEAH subfamily. FANCM sub-subfamily.</text>
</comment>